<feature type="chain" id="PRO_1000018221" description="Tryptophan synthase alpha chain">
    <location>
        <begin position="1"/>
        <end position="253"/>
    </location>
</feature>
<feature type="active site" description="Proton acceptor" evidence="1">
    <location>
        <position position="47"/>
    </location>
</feature>
<feature type="active site" description="Proton acceptor" evidence="1">
    <location>
        <position position="58"/>
    </location>
</feature>
<accession>Q02YB8</accession>
<evidence type="ECO:0000255" key="1">
    <source>
        <dbReference type="HAMAP-Rule" id="MF_00131"/>
    </source>
</evidence>
<dbReference type="EC" id="4.2.1.20" evidence="1"/>
<dbReference type="EMBL" id="CP000425">
    <property type="protein sequence ID" value="ABJ73054.1"/>
    <property type="molecule type" value="Genomic_DNA"/>
</dbReference>
<dbReference type="RefSeq" id="WP_011676414.1">
    <property type="nucleotide sequence ID" value="NC_008527.1"/>
</dbReference>
<dbReference type="SMR" id="Q02YB8"/>
<dbReference type="KEGG" id="llc:LACR_1548"/>
<dbReference type="HOGENOM" id="CLU_016734_0_0_9"/>
<dbReference type="UniPathway" id="UPA00035">
    <property type="reaction ID" value="UER00044"/>
</dbReference>
<dbReference type="Proteomes" id="UP000000240">
    <property type="component" value="Chromosome"/>
</dbReference>
<dbReference type="GO" id="GO:0005829">
    <property type="term" value="C:cytosol"/>
    <property type="evidence" value="ECO:0007669"/>
    <property type="project" value="TreeGrafter"/>
</dbReference>
<dbReference type="GO" id="GO:0004834">
    <property type="term" value="F:tryptophan synthase activity"/>
    <property type="evidence" value="ECO:0007669"/>
    <property type="project" value="UniProtKB-UniRule"/>
</dbReference>
<dbReference type="CDD" id="cd04724">
    <property type="entry name" value="Tryptophan_synthase_alpha"/>
    <property type="match status" value="1"/>
</dbReference>
<dbReference type="Gene3D" id="3.20.20.70">
    <property type="entry name" value="Aldolase class I"/>
    <property type="match status" value="1"/>
</dbReference>
<dbReference type="HAMAP" id="MF_00131">
    <property type="entry name" value="Trp_synth_alpha"/>
    <property type="match status" value="1"/>
</dbReference>
<dbReference type="InterPro" id="IPR013785">
    <property type="entry name" value="Aldolase_TIM"/>
</dbReference>
<dbReference type="InterPro" id="IPR011060">
    <property type="entry name" value="RibuloseP-bd_barrel"/>
</dbReference>
<dbReference type="InterPro" id="IPR018204">
    <property type="entry name" value="Trp_synthase_alpha_AS"/>
</dbReference>
<dbReference type="InterPro" id="IPR002028">
    <property type="entry name" value="Trp_synthase_suA"/>
</dbReference>
<dbReference type="NCBIfam" id="TIGR00262">
    <property type="entry name" value="trpA"/>
    <property type="match status" value="1"/>
</dbReference>
<dbReference type="PANTHER" id="PTHR43406:SF1">
    <property type="entry name" value="TRYPTOPHAN SYNTHASE ALPHA CHAIN, CHLOROPLASTIC"/>
    <property type="match status" value="1"/>
</dbReference>
<dbReference type="PANTHER" id="PTHR43406">
    <property type="entry name" value="TRYPTOPHAN SYNTHASE, ALPHA CHAIN"/>
    <property type="match status" value="1"/>
</dbReference>
<dbReference type="Pfam" id="PF00290">
    <property type="entry name" value="Trp_syntA"/>
    <property type="match status" value="1"/>
</dbReference>
<dbReference type="SUPFAM" id="SSF51366">
    <property type="entry name" value="Ribulose-phoshate binding barrel"/>
    <property type="match status" value="1"/>
</dbReference>
<dbReference type="PROSITE" id="PS00167">
    <property type="entry name" value="TRP_SYNTHASE_ALPHA"/>
    <property type="match status" value="1"/>
</dbReference>
<proteinExistence type="inferred from homology"/>
<sequence length="253" mass="27677">MKTLQAKLSNKKNNFVPYIMAGDHERGLEGLNETIQLLEQAGSSAIEIGVPFSDPVADGPVIEQAGLRALAKNVSLSKILDSLKSIETEVPLVIMTYFNPVYQFGIENFVAALENTAVKGLIIPDLPKEHEAYIKPFITDKDICLVPLVSLTTPISRQKELVVDAEGFIYAVAINGVTGKENAYSNQLDHHLETLSKLTDIPVLTGFGISTLTDVERFNKVSAGVIVGSKIVRDLHENKESDVIKFIKNAINF</sequence>
<name>TRPA_LACLS</name>
<gene>
    <name evidence="1" type="primary">trpA</name>
    <name type="ordered locus">LACR_1548</name>
</gene>
<reference key="1">
    <citation type="journal article" date="2006" name="Proc. Natl. Acad. Sci. U.S.A.">
        <title>Comparative genomics of the lactic acid bacteria.</title>
        <authorList>
            <person name="Makarova K.S."/>
            <person name="Slesarev A."/>
            <person name="Wolf Y.I."/>
            <person name="Sorokin A."/>
            <person name="Mirkin B."/>
            <person name="Koonin E.V."/>
            <person name="Pavlov A."/>
            <person name="Pavlova N."/>
            <person name="Karamychev V."/>
            <person name="Polouchine N."/>
            <person name="Shakhova V."/>
            <person name="Grigoriev I."/>
            <person name="Lou Y."/>
            <person name="Rohksar D."/>
            <person name="Lucas S."/>
            <person name="Huang K."/>
            <person name="Goodstein D.M."/>
            <person name="Hawkins T."/>
            <person name="Plengvidhya V."/>
            <person name="Welker D."/>
            <person name="Hughes J."/>
            <person name="Goh Y."/>
            <person name="Benson A."/>
            <person name="Baldwin K."/>
            <person name="Lee J.-H."/>
            <person name="Diaz-Muniz I."/>
            <person name="Dosti B."/>
            <person name="Smeianov V."/>
            <person name="Wechter W."/>
            <person name="Barabote R."/>
            <person name="Lorca G."/>
            <person name="Altermann E."/>
            <person name="Barrangou R."/>
            <person name="Ganesan B."/>
            <person name="Xie Y."/>
            <person name="Rawsthorne H."/>
            <person name="Tamir D."/>
            <person name="Parker C."/>
            <person name="Breidt F."/>
            <person name="Broadbent J.R."/>
            <person name="Hutkins R."/>
            <person name="O'Sullivan D."/>
            <person name="Steele J."/>
            <person name="Unlu G."/>
            <person name="Saier M.H. Jr."/>
            <person name="Klaenhammer T."/>
            <person name="Richardson P."/>
            <person name="Kozyavkin S."/>
            <person name="Weimer B.C."/>
            <person name="Mills D.A."/>
        </authorList>
    </citation>
    <scope>NUCLEOTIDE SEQUENCE [LARGE SCALE GENOMIC DNA]</scope>
    <source>
        <strain>SK11</strain>
    </source>
</reference>
<keyword id="KW-0028">Amino-acid biosynthesis</keyword>
<keyword id="KW-0057">Aromatic amino acid biosynthesis</keyword>
<keyword id="KW-0456">Lyase</keyword>
<keyword id="KW-0822">Tryptophan biosynthesis</keyword>
<organism>
    <name type="scientific">Lactococcus lactis subsp. cremoris (strain SK11)</name>
    <dbReference type="NCBI Taxonomy" id="272622"/>
    <lineage>
        <taxon>Bacteria</taxon>
        <taxon>Bacillati</taxon>
        <taxon>Bacillota</taxon>
        <taxon>Bacilli</taxon>
        <taxon>Lactobacillales</taxon>
        <taxon>Streptococcaceae</taxon>
        <taxon>Lactococcus</taxon>
        <taxon>Lactococcus cremoris subsp. cremoris</taxon>
    </lineage>
</organism>
<comment type="function">
    <text evidence="1">The alpha subunit is responsible for the aldol cleavage of indoleglycerol phosphate to indole and glyceraldehyde 3-phosphate.</text>
</comment>
<comment type="catalytic activity">
    <reaction evidence="1">
        <text>(1S,2R)-1-C-(indol-3-yl)glycerol 3-phosphate + L-serine = D-glyceraldehyde 3-phosphate + L-tryptophan + H2O</text>
        <dbReference type="Rhea" id="RHEA:10532"/>
        <dbReference type="ChEBI" id="CHEBI:15377"/>
        <dbReference type="ChEBI" id="CHEBI:33384"/>
        <dbReference type="ChEBI" id="CHEBI:57912"/>
        <dbReference type="ChEBI" id="CHEBI:58866"/>
        <dbReference type="ChEBI" id="CHEBI:59776"/>
        <dbReference type="EC" id="4.2.1.20"/>
    </reaction>
</comment>
<comment type="pathway">
    <text evidence="1">Amino-acid biosynthesis; L-tryptophan biosynthesis; L-tryptophan from chorismate: step 5/5.</text>
</comment>
<comment type="subunit">
    <text evidence="1">Tetramer of two alpha and two beta chains.</text>
</comment>
<comment type="similarity">
    <text evidence="1">Belongs to the TrpA family.</text>
</comment>
<protein>
    <recommendedName>
        <fullName evidence="1">Tryptophan synthase alpha chain</fullName>
        <ecNumber evidence="1">4.2.1.20</ecNumber>
    </recommendedName>
</protein>